<dbReference type="EMBL" id="X60322">
    <property type="protein sequence ID" value="CAA42883.1"/>
    <property type="molecule type" value="Genomic_DNA"/>
</dbReference>
<dbReference type="EMBL" id="M25640">
    <property type="protein sequence ID" value="AAA32174.1"/>
    <property type="molecule type" value="Genomic_DNA"/>
</dbReference>
<dbReference type="EMBL" id="J02444">
    <property type="protein sequence ID" value="AAA32176.1"/>
    <property type="molecule type" value="Genomic_RNA"/>
</dbReference>
<dbReference type="PIR" id="A21537">
    <property type="entry name" value="ZHBPA3"/>
</dbReference>
<dbReference type="RefSeq" id="NP_039599.1">
    <property type="nucleotide sequence ID" value="NC_001330.1"/>
</dbReference>
<dbReference type="SMR" id="P03650"/>
<dbReference type="GeneID" id="1260699"/>
<dbReference type="KEGG" id="vg:1260699"/>
<dbReference type="OrthoDB" id="7651at10239"/>
<dbReference type="Proteomes" id="UP000002137">
    <property type="component" value="Genome"/>
</dbReference>
<dbReference type="GO" id="GO:0019028">
    <property type="term" value="C:viral capsid"/>
    <property type="evidence" value="ECO:0007669"/>
    <property type="project" value="UniProtKB-KW"/>
</dbReference>
<dbReference type="GO" id="GO:0046718">
    <property type="term" value="P:symbiont entry into host cell"/>
    <property type="evidence" value="ECO:0007669"/>
    <property type="project" value="UniProtKB-KW"/>
</dbReference>
<dbReference type="Gene3D" id="6.10.250.2700">
    <property type="match status" value="1"/>
</dbReference>
<dbReference type="InterPro" id="IPR006777">
    <property type="entry name" value="Microvir_H"/>
</dbReference>
<dbReference type="Pfam" id="PF04687">
    <property type="entry name" value="Microvir_H"/>
    <property type="match status" value="1"/>
</dbReference>
<dbReference type="PIRSF" id="PIRSF004160">
    <property type="entry name" value="Microvir_H"/>
    <property type="match status" value="1"/>
</dbReference>
<gene>
    <name type="primary">H</name>
</gene>
<feature type="chain" id="PRO_0000164898" description="Minor spike protein">
    <location>
        <begin position="1"/>
        <end position="330"/>
    </location>
</feature>
<feature type="region of interest" description="Disordered" evidence="2">
    <location>
        <begin position="57"/>
        <end position="79"/>
    </location>
</feature>
<reference key="1">
    <citation type="journal article" date="1992" name="Biochim. Biophys. Acta">
        <title>Nucleotide sequence of the genome of the bacteriophage alpha 3: interrelationship of the genome structure and the gene products with those of the phages, phi X174, G4 and phi K.</title>
        <authorList>
            <person name="Kodaira K."/>
            <person name="Nakano K."/>
            <person name="Okada S."/>
            <person name="Taketo A."/>
        </authorList>
    </citation>
    <scope>NUCLEOTIDE SEQUENCE</scope>
</reference>
<reference key="2">
    <citation type="journal article" date="1985" name="Biochim. Biophys. Acta">
        <title>Function and structure of microvirid phage alpha 3 genome. DNA sequence of H gene and properties of missense H mutant.</title>
        <authorList>
            <person name="Kodaira K."/>
            <person name="Nakano K."/>
            <person name="Taketo A."/>
        </authorList>
    </citation>
    <scope>NUCLEOTIDE SEQUENCE</scope>
</reference>
<reference key="3">
    <citation type="journal article" date="1979" name="J. Biol. Chem.">
        <title>dnaG (primase)-dependent origins of DNA replication. Nucleotide sequences of the negative strand initiation sites of bacteriophages St-1, phi K, and alpha 3.</title>
        <authorList>
            <person name="Sims J."/>
            <person name="Capon D."/>
            <person name="Dressler D."/>
        </authorList>
    </citation>
    <scope>NUCLEOTIDE SEQUENCE OF 1-70</scope>
</reference>
<organism>
    <name type="scientific">Escherichia phage alpha3</name>
    <name type="common">Bacteriophage alpha-3</name>
    <dbReference type="NCBI Taxonomy" id="10849"/>
    <lineage>
        <taxon>Viruses</taxon>
        <taxon>Monodnaviria</taxon>
        <taxon>Sangervirae</taxon>
        <taxon>Phixviricota</taxon>
        <taxon>Malgrandaviricetes</taxon>
        <taxon>Petitvirales</taxon>
        <taxon>Microviridae</taxon>
        <taxon>Bullavirinae</taxon>
        <taxon>Alphatrevirus</taxon>
        <taxon>Alphatrevirus alpha3</taxon>
    </lineage>
</organism>
<keyword id="KW-0167">Capsid protein</keyword>
<keyword id="KW-1185">Reference proteome</keyword>
<keyword id="KW-1171">Viral genome ejection through host cell envelope</keyword>
<keyword id="KW-1162">Viral penetration into host cytoplasm</keyword>
<keyword id="KW-0946">Virion</keyword>
<keyword id="KW-1160">Virus entry into host cell</keyword>
<protein>
    <recommendedName>
        <fullName>Minor spike protein</fullName>
    </recommendedName>
    <alternativeName>
        <fullName>H protein</fullName>
    </alternativeName>
    <alternativeName>
        <fullName>Pilot protein</fullName>
    </alternativeName>
</protein>
<name>VGH_BPAL3</name>
<evidence type="ECO:0000250" key="1"/>
<evidence type="ECO:0000256" key="2">
    <source>
        <dbReference type="SAM" id="MobiDB-lite"/>
    </source>
</evidence>
<evidence type="ECO:0000305" key="3"/>
<organismHost>
    <name type="scientific">Escherichia coli</name>
    <dbReference type="NCBI Taxonomy" id="562"/>
</organismHost>
<accession>P03650</accession>
<proteinExistence type="inferred from homology"/>
<sequence length="330" mass="34844">MLGAVVGGIASALASGAASKLFGGSQRGVSVMQQGAESAGLTNGGGAISMDNDQGIQSAIQGSNVPPAGQLPESQNSGVMADAGNMLRNAGKSLLDGTIQAGSDKVKQALIDKLIGGNDAKDRGKATRDYLAAAFPELNPWERAGAGASTAGLESSAQNQQKEMLKMQLDNQKDIAKMQMDNNLQIAGIQSATSRQNTKDSVYAQNEMLQYNQRESQARVASILANTDLTTKQATHEIMRMALTRAQETGQHLTNSQIMALEKKVYAEIGKIHQDTQNSRYGSSQVTAAAKDVTNMITDAASGASDWVSQQWNSFFKDGKSNGISLNTRK</sequence>
<comment type="function">
    <text evidence="1">Minor spike component of the viral shell. Involved in the ejection of the phage DNA in the host and is injected with the DNA in the periplasmic space of the host. Involved in the determination of the phage host-range (By similarity).</text>
</comment>
<comment type="subunit">
    <text>The virion is composed of 60 copies each of the F, G, and J proteins, and 12 copies of the H protein. There are 12 spikes which are each composed of 5 G and one H proteins.</text>
</comment>
<comment type="subcellular location">
    <subcellularLocation>
        <location evidence="3">Virion</location>
    </subcellularLocation>
</comment>